<sequence>MNTIFKISALTLSAALALSACGKKEAAPASASEPAAASSAQGDTSSIGSTMQQASYAMGVDIGRSLKQMKEQGAEIDLKVFTEAMQAVYDGKEIKMTEEQAQEVMMKFLQEQQAKAVEKHKADAKANKEKGEAFLKENAAKDGVKTTASGLQYKITKQGEGKQPTKDDIVTVEYEGRLIDGTVFDSSKANGGPVTFPLSQVIPGWTEGVQLLKEGGEATFYIPSNLAYREQGAGDKIGPNATLVFDVKLVKIGAPENAPAKQPAQVDIKKVN</sequence>
<gene>
    <name type="primary">fkpA</name>
    <name type="ordered locus">NMB1567</name>
</gene>
<keyword id="KW-1003">Cell membrane</keyword>
<keyword id="KW-0413">Isomerase</keyword>
<keyword id="KW-0449">Lipoprotein</keyword>
<keyword id="KW-0472">Membrane</keyword>
<keyword id="KW-0564">Palmitate</keyword>
<keyword id="KW-1185">Reference proteome</keyword>
<keyword id="KW-0697">Rotamase</keyword>
<keyword id="KW-0732">Signal</keyword>
<organism>
    <name type="scientific">Neisseria meningitidis serogroup B (strain ATCC BAA-335 / MC58)</name>
    <dbReference type="NCBI Taxonomy" id="122586"/>
    <lineage>
        <taxon>Bacteria</taxon>
        <taxon>Pseudomonadati</taxon>
        <taxon>Pseudomonadota</taxon>
        <taxon>Betaproteobacteria</taxon>
        <taxon>Neisseriales</taxon>
        <taxon>Neisseriaceae</taxon>
        <taxon>Neisseria</taxon>
    </lineage>
</organism>
<comment type="catalytic activity">
    <reaction>
        <text>[protein]-peptidylproline (omega=180) = [protein]-peptidylproline (omega=0)</text>
        <dbReference type="Rhea" id="RHEA:16237"/>
        <dbReference type="Rhea" id="RHEA-COMP:10747"/>
        <dbReference type="Rhea" id="RHEA-COMP:10748"/>
        <dbReference type="ChEBI" id="CHEBI:83833"/>
        <dbReference type="ChEBI" id="CHEBI:83834"/>
        <dbReference type="EC" id="5.2.1.8"/>
    </reaction>
</comment>
<comment type="subcellular location">
    <subcellularLocation>
        <location evidence="2">Cell membrane</location>
        <topology evidence="2">Lipid-anchor</topology>
    </subcellularLocation>
</comment>
<comment type="miscellaneous">
    <text>Present in outer membrane vesicle formulations which are used as vaccines in human.</text>
</comment>
<comment type="similarity">
    <text evidence="4">Belongs to the FKBP-type PPIase family.</text>
</comment>
<name>FKBA_NEIMB</name>
<protein>
    <recommendedName>
        <fullName>Probable FKBP-type peptidyl-prolyl cis-trans isomerase FkpA</fullName>
        <shortName>PPIase</shortName>
        <ecNumber>5.2.1.8</ecNumber>
    </recommendedName>
    <alternativeName>
        <fullName>Rotamase</fullName>
    </alternativeName>
</protein>
<reference key="1">
    <citation type="journal article" date="2000" name="Science">
        <title>Complete genome sequence of Neisseria meningitidis serogroup B strain MC58.</title>
        <authorList>
            <person name="Tettelin H."/>
            <person name="Saunders N.J."/>
            <person name="Heidelberg J.F."/>
            <person name="Jeffries A.C."/>
            <person name="Nelson K.E."/>
            <person name="Eisen J.A."/>
            <person name="Ketchum K.A."/>
            <person name="Hood D.W."/>
            <person name="Peden J.F."/>
            <person name="Dodson R.J."/>
            <person name="Nelson W.C."/>
            <person name="Gwinn M.L."/>
            <person name="DeBoy R.T."/>
            <person name="Peterson J.D."/>
            <person name="Hickey E.K."/>
            <person name="Haft D.H."/>
            <person name="Salzberg S.L."/>
            <person name="White O."/>
            <person name="Fleischmann R.D."/>
            <person name="Dougherty B.A."/>
            <person name="Mason T.M."/>
            <person name="Ciecko A."/>
            <person name="Parksey D.S."/>
            <person name="Blair E."/>
            <person name="Cittone H."/>
            <person name="Clark E.B."/>
            <person name="Cotton M.D."/>
            <person name="Utterback T.R."/>
            <person name="Khouri H.M."/>
            <person name="Qin H."/>
            <person name="Vamathevan J.J."/>
            <person name="Gill J."/>
            <person name="Scarlato V."/>
            <person name="Masignani V."/>
            <person name="Pizza M."/>
            <person name="Grandi G."/>
            <person name="Sun L."/>
            <person name="Smith H.O."/>
            <person name="Fraser C.M."/>
            <person name="Moxon E.R."/>
            <person name="Rappuoli R."/>
            <person name="Venter J.C."/>
        </authorList>
    </citation>
    <scope>NUCLEOTIDE SEQUENCE [LARGE SCALE GENOMIC DNA]</scope>
    <source>
        <strain>ATCC BAA-335 / MC58</strain>
    </source>
</reference>
<reference key="2">
    <citation type="journal article" date="2006" name="Proteomics">
        <title>Proteomic analysis of a meningococcal outer membrane vesicle vaccine prepared from the group B strain NZ98/254.</title>
        <authorList>
            <person name="Vipond C."/>
            <person name="Suker J."/>
            <person name="Jones C."/>
            <person name="Tang C."/>
            <person name="Feavers I.M."/>
            <person name="Wheeler J.X."/>
        </authorList>
    </citation>
    <scope>IDENTIFICATION BY MASS SPECTROMETRY [LARGE SCALE ANALYSIS]</scope>
    <source>
        <strain>NZ98/254 / Serogroup B</strain>
    </source>
</reference>
<feature type="signal peptide" evidence="2">
    <location>
        <begin position="1"/>
        <end position="20"/>
    </location>
</feature>
<feature type="chain" id="PRO_0000349891" description="Probable FKBP-type peptidyl-prolyl cis-trans isomerase FkpA">
    <location>
        <begin position="21"/>
        <end position="272"/>
    </location>
</feature>
<feature type="domain" description="PPIase FKBP-type" evidence="1">
    <location>
        <begin position="167"/>
        <end position="253"/>
    </location>
</feature>
<feature type="region of interest" description="Disordered" evidence="3">
    <location>
        <begin position="29"/>
        <end position="48"/>
    </location>
</feature>
<feature type="compositionally biased region" description="Low complexity" evidence="3">
    <location>
        <begin position="29"/>
        <end position="40"/>
    </location>
</feature>
<feature type="lipid moiety-binding region" description="N-palmitoyl cysteine" evidence="2">
    <location>
        <position position="21"/>
    </location>
</feature>
<feature type="lipid moiety-binding region" description="S-diacylglycerol cysteine" evidence="2">
    <location>
        <position position="21"/>
    </location>
</feature>
<proteinExistence type="evidence at protein level"/>
<accession>Q9JYI8</accession>
<dbReference type="EC" id="5.2.1.8"/>
<dbReference type="EMBL" id="AE002098">
    <property type="protein sequence ID" value="AAF41921.1"/>
    <property type="molecule type" value="Genomic_DNA"/>
</dbReference>
<dbReference type="PIR" id="C81068">
    <property type="entry name" value="C81068"/>
</dbReference>
<dbReference type="RefSeq" id="NP_274574.1">
    <property type="nucleotide sequence ID" value="NC_003112.2"/>
</dbReference>
<dbReference type="RefSeq" id="WP_002212827.1">
    <property type="nucleotide sequence ID" value="NC_003112.2"/>
</dbReference>
<dbReference type="SMR" id="Q9JYI8"/>
<dbReference type="FunCoup" id="Q9JYI8">
    <property type="interactions" value="196"/>
</dbReference>
<dbReference type="STRING" id="122586.NMB1567"/>
<dbReference type="PaxDb" id="122586-NMB1567"/>
<dbReference type="KEGG" id="nme:NMB1567"/>
<dbReference type="PATRIC" id="fig|122586.8.peg.2017"/>
<dbReference type="HOGENOM" id="CLU_013615_0_2_4"/>
<dbReference type="InParanoid" id="Q9JYI8"/>
<dbReference type="OrthoDB" id="280278at2"/>
<dbReference type="Proteomes" id="UP000000425">
    <property type="component" value="Chromosome"/>
</dbReference>
<dbReference type="GO" id="GO:0005886">
    <property type="term" value="C:plasma membrane"/>
    <property type="evidence" value="ECO:0007669"/>
    <property type="project" value="UniProtKB-SubCell"/>
</dbReference>
<dbReference type="GO" id="GO:0003755">
    <property type="term" value="F:peptidyl-prolyl cis-trans isomerase activity"/>
    <property type="evidence" value="ECO:0000318"/>
    <property type="project" value="GO_Central"/>
</dbReference>
<dbReference type="GO" id="GO:0006457">
    <property type="term" value="P:protein folding"/>
    <property type="evidence" value="ECO:0007669"/>
    <property type="project" value="InterPro"/>
</dbReference>
<dbReference type="FunFam" id="3.10.50.40:FF:000004">
    <property type="entry name" value="Peptidyl-prolyl cis-trans isomerase"/>
    <property type="match status" value="1"/>
</dbReference>
<dbReference type="Gene3D" id="3.10.50.40">
    <property type="match status" value="1"/>
</dbReference>
<dbReference type="Gene3D" id="1.10.287.460">
    <property type="entry name" value="Peptidyl-prolyl cis-trans isomerase, FKBP-type, N-terminal domain"/>
    <property type="match status" value="1"/>
</dbReference>
<dbReference type="InterPro" id="IPR008104">
    <property type="entry name" value="INFPOTNTIATR"/>
</dbReference>
<dbReference type="InterPro" id="IPR046357">
    <property type="entry name" value="PPIase_dom_sf"/>
</dbReference>
<dbReference type="InterPro" id="IPR001179">
    <property type="entry name" value="PPIase_FKBP_dom"/>
</dbReference>
<dbReference type="InterPro" id="IPR000774">
    <property type="entry name" value="PPIase_FKBP_N"/>
</dbReference>
<dbReference type="InterPro" id="IPR036944">
    <property type="entry name" value="PPIase_FKBP_N_sf"/>
</dbReference>
<dbReference type="PANTHER" id="PTHR43811">
    <property type="entry name" value="FKBP-TYPE PEPTIDYL-PROLYL CIS-TRANS ISOMERASE FKPA"/>
    <property type="match status" value="1"/>
</dbReference>
<dbReference type="PANTHER" id="PTHR43811:SF57">
    <property type="entry name" value="FKBP-TYPE PEPTIDYL-PROLYL CIS-TRANS ISOMERASE FKPA-RELATED"/>
    <property type="match status" value="1"/>
</dbReference>
<dbReference type="Pfam" id="PF00254">
    <property type="entry name" value="FKBP_C"/>
    <property type="match status" value="1"/>
</dbReference>
<dbReference type="Pfam" id="PF01346">
    <property type="entry name" value="FKBP_N"/>
    <property type="match status" value="1"/>
</dbReference>
<dbReference type="PRINTS" id="PR01730">
    <property type="entry name" value="INFPOTNTIATR"/>
</dbReference>
<dbReference type="SUPFAM" id="SSF54534">
    <property type="entry name" value="FKBP-like"/>
    <property type="match status" value="1"/>
</dbReference>
<dbReference type="PROSITE" id="PS50059">
    <property type="entry name" value="FKBP_PPIASE"/>
    <property type="match status" value="1"/>
</dbReference>
<dbReference type="PROSITE" id="PS51257">
    <property type="entry name" value="PROKAR_LIPOPROTEIN"/>
    <property type="match status" value="1"/>
</dbReference>
<evidence type="ECO:0000255" key="1">
    <source>
        <dbReference type="PROSITE-ProRule" id="PRU00277"/>
    </source>
</evidence>
<evidence type="ECO:0000255" key="2">
    <source>
        <dbReference type="PROSITE-ProRule" id="PRU00303"/>
    </source>
</evidence>
<evidence type="ECO:0000256" key="3">
    <source>
        <dbReference type="SAM" id="MobiDB-lite"/>
    </source>
</evidence>
<evidence type="ECO:0000305" key="4"/>